<reference key="1">
    <citation type="journal article" date="1995" name="Am. J. Physiol.">
        <title>Cloning of a rabbit renal Na-Pi cotransporter, which is regulated by dietary phosphate.</title>
        <authorList>
            <person name="Verri T."/>
            <person name="Markovich D."/>
            <person name="Perego C."/>
            <person name="Norbis F."/>
            <person name="Stange G."/>
            <person name="Sorribas V."/>
            <person name="Biber J."/>
            <person name="Murer H."/>
        </authorList>
    </citation>
    <scope>NUCLEOTIDE SEQUENCE [MRNA]</scope>
    <scope>FUNCTION</scope>
    <scope>TRANSPORTER ACTIVITY</scope>
    <scope>TISSUE SPECIFICITY</scope>
    <scope>ACTIVITY REGULATION</scope>
    <scope>INDUCTION</scope>
    <source>
        <tissue>Kidney</tissue>
    </source>
</reference>
<evidence type="ECO:0000250" key="1">
    <source>
        <dbReference type="UniProtKB" id="Q06495"/>
    </source>
</evidence>
<evidence type="ECO:0000250" key="2">
    <source>
        <dbReference type="UniProtKB" id="Q06496"/>
    </source>
</evidence>
<evidence type="ECO:0000250" key="3">
    <source>
        <dbReference type="UniProtKB" id="Q60825"/>
    </source>
</evidence>
<evidence type="ECO:0000255" key="4"/>
<evidence type="ECO:0000269" key="5">
    <source>
    </source>
</evidence>
<evidence type="ECO:0000303" key="6">
    <source>
    </source>
</evidence>
<evidence type="ECO:0000305" key="7"/>
<evidence type="ECO:0000305" key="8">
    <source>
    </source>
</evidence>
<keyword id="KW-1003">Cell membrane</keyword>
<keyword id="KW-1015">Disulfide bond</keyword>
<keyword id="KW-0325">Glycoprotein</keyword>
<keyword id="KW-0406">Ion transport</keyword>
<keyword id="KW-0472">Membrane</keyword>
<keyword id="KW-0597">Phosphoprotein</keyword>
<keyword id="KW-1185">Reference proteome</keyword>
<keyword id="KW-0915">Sodium</keyword>
<keyword id="KW-0739">Sodium transport</keyword>
<keyword id="KW-0769">Symport</keyword>
<keyword id="KW-0812">Transmembrane</keyword>
<keyword id="KW-1133">Transmembrane helix</keyword>
<keyword id="KW-0813">Transport</keyword>
<feature type="chain" id="PRO_0000068609" description="Sodium-dependent phosphate transport protein 2A">
    <location>
        <begin position="1"/>
        <end position="642"/>
    </location>
</feature>
<feature type="topological domain" description="Cytoplasmic" evidence="2">
    <location>
        <begin position="1"/>
        <end position="106"/>
    </location>
</feature>
<feature type="transmembrane region" description="Helical; Name=M1" evidence="4">
    <location>
        <begin position="107"/>
        <end position="128"/>
    </location>
</feature>
<feature type="topological domain" description="Extracellular" evidence="2">
    <location>
        <begin position="129"/>
        <end position="148"/>
    </location>
</feature>
<feature type="transmembrane region" description="Helical; Name=M2" evidence="4">
    <location>
        <begin position="149"/>
        <end position="166"/>
    </location>
</feature>
<feature type="topological domain" description="Cytoplasmic" evidence="2">
    <location>
        <begin position="167"/>
        <end position="168"/>
    </location>
</feature>
<feature type="transmembrane region" description="Helical; Name=M3" evidence="4">
    <location>
        <begin position="169"/>
        <end position="188"/>
    </location>
</feature>
<feature type="topological domain" description="Extracellular" evidence="2">
    <location>
        <begin position="189"/>
        <end position="350"/>
    </location>
</feature>
<feature type="transmembrane region" description="Helical; Name=M4" evidence="4">
    <location>
        <begin position="351"/>
        <end position="373"/>
    </location>
</feature>
<feature type="topological domain" description="Cytoplasmic" evidence="2">
    <location>
        <begin position="374"/>
        <end position="415"/>
    </location>
</feature>
<feature type="transmembrane region" description="Helical; Name=M5" evidence="4">
    <location>
        <begin position="416"/>
        <end position="439"/>
    </location>
</feature>
<feature type="topological domain" description="Extracellular" evidence="2">
    <location>
        <begin position="440"/>
        <end position="469"/>
    </location>
</feature>
<feature type="transmembrane region" description="Helical; Name=M6" evidence="4">
    <location>
        <begin position="470"/>
        <end position="490"/>
    </location>
</feature>
<feature type="topological domain" description="Cytoplasmic" evidence="2">
    <location>
        <begin position="491"/>
        <end position="516"/>
    </location>
</feature>
<feature type="transmembrane region" description="Helical; Name=M7" evidence="4">
    <location>
        <begin position="517"/>
        <end position="537"/>
    </location>
</feature>
<feature type="topological domain" description="Extracellular" evidence="2">
    <location>
        <begin position="538"/>
        <end position="542"/>
    </location>
</feature>
<feature type="transmembrane region" description="Helical; Name=M8" evidence="4">
    <location>
        <begin position="543"/>
        <end position="564"/>
    </location>
</feature>
<feature type="topological domain" description="Cytoplasmic" evidence="2">
    <location>
        <begin position="565"/>
        <end position="642"/>
    </location>
</feature>
<feature type="modified residue" description="Phosphoserine" evidence="2">
    <location>
        <position position="14"/>
    </location>
</feature>
<feature type="modified residue" description="Phosphoserine" evidence="3">
    <location>
        <position position="37"/>
    </location>
</feature>
<feature type="modified residue" description="Phosphothreonine; by PKC" evidence="4">
    <location>
        <position position="511"/>
    </location>
</feature>
<feature type="modified residue" description="Phosphoserine" evidence="2">
    <location>
        <position position="610"/>
    </location>
</feature>
<feature type="modified residue" description="Phosphothreonine" evidence="3">
    <location>
        <position position="626"/>
    </location>
</feature>
<feature type="modified residue" description="Phosphoserine" evidence="3">
    <location>
        <position position="628"/>
    </location>
</feature>
<feature type="glycosylation site" description="N-linked (GlcNAc...) asparagine" evidence="4">
    <location>
        <position position="301"/>
    </location>
</feature>
<feature type="glycosylation site" description="N-linked (GlcNAc...) asparagine" evidence="4">
    <location>
        <position position="326"/>
    </location>
</feature>
<feature type="glycosylation site" description="N-linked (GlcNAc...) asparagine" evidence="4">
    <location>
        <position position="333"/>
    </location>
</feature>
<feature type="disulfide bond" evidence="2">
    <location>
        <begin position="228"/>
        <end position="525"/>
    </location>
</feature>
<feature type="disulfide bond" evidence="2">
    <location>
        <begin position="309"/>
        <end position="339"/>
    </location>
</feature>
<dbReference type="EMBL" id="U20793">
    <property type="protein sequence ID" value="AAA77682.1"/>
    <property type="molecule type" value="mRNA"/>
</dbReference>
<dbReference type="PIR" id="I46534">
    <property type="entry name" value="I46534"/>
</dbReference>
<dbReference type="RefSeq" id="NP_001076142.1">
    <property type="nucleotide sequence ID" value="NM_001082673.2"/>
</dbReference>
<dbReference type="FunCoup" id="Q28620">
    <property type="interactions" value="12"/>
</dbReference>
<dbReference type="STRING" id="9986.ENSOCUP00000041933"/>
<dbReference type="GlyCosmos" id="Q28620">
    <property type="glycosylation" value="3 sites, No reported glycans"/>
</dbReference>
<dbReference type="PaxDb" id="9986-ENSOCUP00000002416"/>
<dbReference type="Ensembl" id="ENSOCUT00000002784.2">
    <property type="protein sequence ID" value="ENSOCUP00000002416.2"/>
    <property type="gene ID" value="ENSOCUG00000002783.3"/>
</dbReference>
<dbReference type="GeneID" id="100009392"/>
<dbReference type="KEGG" id="ocu:100009392"/>
<dbReference type="CTD" id="6569"/>
<dbReference type="eggNOG" id="ENOG502QQ3I">
    <property type="taxonomic scope" value="Eukaryota"/>
</dbReference>
<dbReference type="GeneTree" id="ENSGT00950000183177"/>
<dbReference type="HOGENOM" id="CLU_025063_0_0_1"/>
<dbReference type="InParanoid" id="Q28620"/>
<dbReference type="OMA" id="HDAIPVM"/>
<dbReference type="OrthoDB" id="76259at2759"/>
<dbReference type="TreeFam" id="TF313981"/>
<dbReference type="Proteomes" id="UP000001811">
    <property type="component" value="Chromosome 3"/>
</dbReference>
<dbReference type="Bgee" id="ENSOCUG00000002783">
    <property type="expression patterns" value="Expressed in kidney and 12 other cell types or tissues"/>
</dbReference>
<dbReference type="GO" id="GO:0016324">
    <property type="term" value="C:apical plasma membrane"/>
    <property type="evidence" value="ECO:0000250"/>
    <property type="project" value="UniProtKB"/>
</dbReference>
<dbReference type="GO" id="GO:0005903">
    <property type="term" value="C:brush border"/>
    <property type="evidence" value="ECO:0007669"/>
    <property type="project" value="TreeGrafter"/>
</dbReference>
<dbReference type="GO" id="GO:0005886">
    <property type="term" value="C:plasma membrane"/>
    <property type="evidence" value="ECO:0000250"/>
    <property type="project" value="UniProtKB"/>
</dbReference>
<dbReference type="GO" id="GO:0031982">
    <property type="term" value="C:vesicle"/>
    <property type="evidence" value="ECO:0007669"/>
    <property type="project" value="TreeGrafter"/>
</dbReference>
<dbReference type="GO" id="GO:0005436">
    <property type="term" value="F:sodium:phosphate symporter activity"/>
    <property type="evidence" value="ECO:0000314"/>
    <property type="project" value="UniProtKB"/>
</dbReference>
<dbReference type="GO" id="GO:0016036">
    <property type="term" value="P:cellular response to phosphate starvation"/>
    <property type="evidence" value="ECO:0000314"/>
    <property type="project" value="UniProtKB"/>
</dbReference>
<dbReference type="GO" id="GO:0030643">
    <property type="term" value="P:intracellular phosphate ion homeostasis"/>
    <property type="evidence" value="ECO:0007669"/>
    <property type="project" value="TreeGrafter"/>
</dbReference>
<dbReference type="GO" id="GO:0055062">
    <property type="term" value="P:phosphate ion homeostasis"/>
    <property type="evidence" value="ECO:0000250"/>
    <property type="project" value="UniProtKB"/>
</dbReference>
<dbReference type="GO" id="GO:0006817">
    <property type="term" value="P:phosphate ion transport"/>
    <property type="evidence" value="ECO:0000250"/>
    <property type="project" value="UniProtKB"/>
</dbReference>
<dbReference type="GO" id="GO:0044341">
    <property type="term" value="P:sodium-dependent phosphate transport"/>
    <property type="evidence" value="ECO:0007669"/>
    <property type="project" value="InterPro"/>
</dbReference>
<dbReference type="InterPro" id="IPR003841">
    <property type="entry name" value="Na/Pi_transpt"/>
</dbReference>
<dbReference type="NCBIfam" id="TIGR01013">
    <property type="entry name" value="2a58"/>
    <property type="match status" value="1"/>
</dbReference>
<dbReference type="NCBIfam" id="NF037997">
    <property type="entry name" value="Na_Pi_symport"/>
    <property type="match status" value="1"/>
</dbReference>
<dbReference type="PANTHER" id="PTHR10010:SF21">
    <property type="entry name" value="SODIUM-DEPENDENT PHOSPHATE TRANSPORT PROTEIN 2A"/>
    <property type="match status" value="1"/>
</dbReference>
<dbReference type="PANTHER" id="PTHR10010">
    <property type="entry name" value="SOLUTE CARRIER FAMILY 34 SODIUM PHOSPHATE , MEMBER 2-RELATED"/>
    <property type="match status" value="1"/>
</dbReference>
<dbReference type="Pfam" id="PF02690">
    <property type="entry name" value="Na_Pi_cotrans"/>
    <property type="match status" value="2"/>
</dbReference>
<proteinExistence type="evidence at transcript level"/>
<gene>
    <name evidence="1" type="primary">SLC34A1</name>
    <name evidence="1" type="synonym">SLC17A2</name>
</gene>
<name>NPT2A_RABIT</name>
<protein>
    <recommendedName>
        <fullName>Sodium-dependent phosphate transport protein 2A</fullName>
        <shortName>Sodium-phosphate transport protein 2A</shortName>
    </recommendedName>
    <alternativeName>
        <fullName>Na(+)-dependent phosphate cotransporter 2A</fullName>
    </alternativeName>
    <alternativeName>
        <fullName evidence="6">NaPi-6</fullName>
    </alternativeName>
    <alternativeName>
        <fullName>Sodium/phosphate cotransporter 2A</fullName>
        <shortName>Na(+)/Pi cotransporter 2A</shortName>
        <shortName>NaPi-2a</shortName>
    </alternativeName>
    <alternativeName>
        <fullName evidence="1">Solute carrier family 34 member 1</fullName>
    </alternativeName>
</protein>
<organism>
    <name type="scientific">Oryctolagus cuniculus</name>
    <name type="common">Rabbit</name>
    <dbReference type="NCBI Taxonomy" id="9986"/>
    <lineage>
        <taxon>Eukaryota</taxon>
        <taxon>Metazoa</taxon>
        <taxon>Chordata</taxon>
        <taxon>Craniata</taxon>
        <taxon>Vertebrata</taxon>
        <taxon>Euteleostomi</taxon>
        <taxon>Mammalia</taxon>
        <taxon>Eutheria</taxon>
        <taxon>Euarchontoglires</taxon>
        <taxon>Glires</taxon>
        <taxon>Lagomorpha</taxon>
        <taxon>Leporidae</taxon>
        <taxon>Oryctolagus</taxon>
    </lineage>
</organism>
<comment type="function">
    <text evidence="2 5">Involved in actively transporting phosphate into cells via Na(+) cotransport in the renal brush border membrane (PubMed:7733319). The cotransport has a Na(+):Pi stoichiometry of 3:1 and is electrogenic (By similarity).</text>
</comment>
<comment type="catalytic activity">
    <reaction evidence="5">
        <text>3 Na(+)(out) + phosphate(out) = 3 Na(+)(in) + phosphate(in)</text>
        <dbReference type="Rhea" id="RHEA:71255"/>
        <dbReference type="ChEBI" id="CHEBI:29101"/>
        <dbReference type="ChEBI" id="CHEBI:43474"/>
    </reaction>
    <physiologicalReaction direction="left-to-right" evidence="8">
        <dbReference type="Rhea" id="RHEA:71256"/>
    </physiologicalReaction>
</comment>
<comment type="activity regulation">
    <text evidence="5">Transport activity is significantly increased in response to dietary phosphate deprivation.</text>
</comment>
<comment type="subunit">
    <text evidence="1 3">Interacts via its C-terminal region with NHERF4. Interacts with NHERF1. Interacts with TMEM174; regulates SLC34A1 internalization by PTH and FGF23 (By similarity).</text>
</comment>
<comment type="subcellular location">
    <subcellularLocation>
        <location evidence="1">Apical cell membrane</location>
        <topology evidence="4">Multi-pass membrane protein</topology>
    </subcellularLocation>
    <subcellularLocation>
        <location evidence="2">Cell membrane</location>
        <topology evidence="4">Multi-pass membrane protein</topology>
    </subcellularLocation>
    <text evidence="2 3">Localized at the brush border membranes of the proximal tubules. Internalized from the cell surface upon PTH stimulation.</text>
</comment>
<comment type="tissue specificity">
    <text evidence="5">Expressed in the kidney cortex.</text>
</comment>
<comment type="induction">
    <text evidence="5">Up-regulated by a low-phosphate diet.</text>
</comment>
<comment type="similarity">
    <text evidence="7">Belongs to the SLC34A transporter family.</text>
</comment>
<sequence>MISYGEQLSSPAVSPPLVRAGLRGPMMHGATFAYVPSPQALHRIPGTSAYAFPSLSPVALTEHGCPYGEARERHEPLPAKLALEEEQKPESGWAQELRRTAMTLLKLPLMVTFLYLFVCSLDVLSSAFQLAGGKVAGDIFKDNAILANPVAGLVVGILVTVLVQSSSTATSIIVSMVSSGLLEVSSAIPIIMGSNIGTSVTNTIVALMQAGDRTDFRRAFAGATVHDCFNWLSVLVLLPLEAATGYLHHVTGLVVASFNIRGGRDAPDLLKTITEPFTKLIIQLDRSVITSIATGDESLRNHSLIRIWCHRDPVEASTSMARAETNISRTHGNATMEKCNHIFVDTQLPDLAVGLILLAGSLVLLCTCLILLVKMLNSLLKGQVAKVIQKVINTDLPAPFTWVTGYFAMVVGAAMTFIVQSSSVFTSAITPLVGLGVISIERAYPLTLGSNIGTTTTAILAALASPREKLSSSFQIALCHFFFNISGILLWYPLPCTRLPIRMAKALGKRTAKYRWFAVLYLLVCFLLLPSLVFGISMAGWRAMVGVGAPFGALLAFVVLINVLQSRSPGRLPKWLQTWDFLPHWMHSLQPLDHLITHATLCCSRSEPRSPQLPARVFLEELPPATPSPRLALPAHHNATRL</sequence>
<accession>Q28620</accession>